<reference key="1">
    <citation type="journal article" date="1996" name="Science">
        <title>Complete genome sequence of the methanogenic archaeon, Methanococcus jannaschii.</title>
        <authorList>
            <person name="Bult C.J."/>
            <person name="White O."/>
            <person name="Olsen G.J."/>
            <person name="Zhou L."/>
            <person name="Fleischmann R.D."/>
            <person name="Sutton G.G."/>
            <person name="Blake J.A."/>
            <person name="FitzGerald L.M."/>
            <person name="Clayton R.A."/>
            <person name="Gocayne J.D."/>
            <person name="Kerlavage A.R."/>
            <person name="Dougherty B.A."/>
            <person name="Tomb J.-F."/>
            <person name="Adams M.D."/>
            <person name="Reich C.I."/>
            <person name="Overbeek R."/>
            <person name="Kirkness E.F."/>
            <person name="Weinstock K.G."/>
            <person name="Merrick J.M."/>
            <person name="Glodek A."/>
            <person name="Scott J.L."/>
            <person name="Geoghagen N.S.M."/>
            <person name="Weidman J.F."/>
            <person name="Fuhrmann J.L."/>
            <person name="Nguyen D."/>
            <person name="Utterback T.R."/>
            <person name="Kelley J.M."/>
            <person name="Peterson J.D."/>
            <person name="Sadow P.W."/>
            <person name="Hanna M.C."/>
            <person name="Cotton M.D."/>
            <person name="Roberts K.M."/>
            <person name="Hurst M.A."/>
            <person name="Kaine B.P."/>
            <person name="Borodovsky M."/>
            <person name="Klenk H.-P."/>
            <person name="Fraser C.M."/>
            <person name="Smith H.O."/>
            <person name="Woese C.R."/>
            <person name="Venter J.C."/>
        </authorList>
    </citation>
    <scope>NUCLEOTIDE SEQUENCE [LARGE SCALE GENOMIC DNA]</scope>
    <source>
        <strain>ATCC 43067 / DSM 2661 / JAL-1 / JCM 10045 / NBRC 100440</strain>
    </source>
</reference>
<reference key="2">
    <citation type="journal article" date="2004" name="Structure">
        <title>Structure of protein L7Ae bound to a K-turn derived from an archaeal box H/ACA sRNA at 1.8 A resolution.</title>
        <authorList>
            <person name="Hamma T."/>
            <person name="Ferre-D'Amare A.R."/>
        </authorList>
    </citation>
    <scope>X-RAY CRYSTALLOGRAPHY (1.8 ANGSTROMS)</scope>
    <scope>RNA-BINDING</scope>
</reference>
<reference key="3">
    <citation type="journal article" date="2005" name="Biochemistry">
        <title>The crystal structure of the Methanocaldococcus jannaschii multifunctional L7Ae RNA-binding protein reveals an induced-fit interaction with the box C/D RNAs.</title>
        <authorList>
            <person name="Suryadi J."/>
            <person name="Tran E.J."/>
            <person name="Maxwell E.S."/>
            <person name="Brown B.A. II"/>
        </authorList>
    </citation>
    <scope>X-RAY CRYSTALLOGRAPHY (1.45 ANGSTROMS)</scope>
</reference>
<comment type="function">
    <text>Multifunctional RNA-binding protein that recognizes the K-turn motif in ribosomal RNA, the RNA component of RNase P, box H/ACA, box C/D and box C'/D' sRNAs.</text>
</comment>
<comment type="subunit">
    <text evidence="1">Part of the 50S ribosomal subunit. Probably part of the RNase P complex.</text>
</comment>
<comment type="interaction">
    <interactant intactId="EBI-2944269">
        <id>P54066</id>
    </interactant>
    <interactant intactId="EBI-2944259">
        <id>Q58105</id>
        <label>MJ0694</label>
    </interactant>
    <organismsDiffer>false</organismsDiffer>
    <experiments>4</experiments>
</comment>
<comment type="subcellular location">
    <subcellularLocation>
        <location evidence="1">Cytoplasm</location>
    </subcellularLocation>
</comment>
<comment type="similarity">
    <text evidence="1">Belongs to the eukaryotic ribosomal protein eL8 family.</text>
</comment>
<keyword id="KW-0002">3D-structure</keyword>
<keyword id="KW-0963">Cytoplasm</keyword>
<keyword id="KW-1185">Reference proteome</keyword>
<keyword id="KW-0687">Ribonucleoprotein</keyword>
<keyword id="KW-0689">Ribosomal protein</keyword>
<keyword id="KW-0694">RNA-binding</keyword>
<keyword id="KW-0699">rRNA-binding</keyword>
<keyword id="KW-0819">tRNA processing</keyword>
<name>RL7A_METJA</name>
<organism>
    <name type="scientific">Methanocaldococcus jannaschii (strain ATCC 43067 / DSM 2661 / JAL-1 / JCM 10045 / NBRC 100440)</name>
    <name type="common">Methanococcus jannaschii</name>
    <dbReference type="NCBI Taxonomy" id="243232"/>
    <lineage>
        <taxon>Archaea</taxon>
        <taxon>Methanobacteriati</taxon>
        <taxon>Methanobacteriota</taxon>
        <taxon>Methanomada group</taxon>
        <taxon>Methanococci</taxon>
        <taxon>Methanococcales</taxon>
        <taxon>Methanocaldococcaceae</taxon>
        <taxon>Methanocaldococcus</taxon>
    </lineage>
</organism>
<feature type="chain" id="PRO_0000136793" description="Large ribosomal subunit protein eL8">
    <location>
        <begin position="1"/>
        <end position="117"/>
    </location>
</feature>
<feature type="helix" evidence="3">
    <location>
        <begin position="11"/>
        <end position="22"/>
    </location>
</feature>
<feature type="strand" evidence="3">
    <location>
        <begin position="25"/>
        <end position="30"/>
    </location>
</feature>
<feature type="helix" evidence="3">
    <location>
        <begin position="31"/>
        <end position="39"/>
    </location>
</feature>
<feature type="strand" evidence="3">
    <location>
        <begin position="44"/>
        <end position="50"/>
    </location>
</feature>
<feature type="helix" evidence="3">
    <location>
        <begin position="55"/>
        <end position="57"/>
    </location>
</feature>
<feature type="turn" evidence="3">
    <location>
        <begin position="58"/>
        <end position="60"/>
    </location>
</feature>
<feature type="helix" evidence="3">
    <location>
        <begin position="61"/>
        <end position="67"/>
    </location>
</feature>
<feature type="strand" evidence="3">
    <location>
        <begin position="72"/>
        <end position="76"/>
    </location>
</feature>
<feature type="helix" evidence="3">
    <location>
        <begin position="78"/>
        <end position="84"/>
    </location>
</feature>
<feature type="strand" evidence="3">
    <location>
        <begin position="92"/>
        <end position="98"/>
    </location>
</feature>
<feature type="helix" evidence="3">
    <location>
        <begin position="102"/>
        <end position="115"/>
    </location>
</feature>
<gene>
    <name evidence="1" type="primary">rpl7ae</name>
    <name type="ordered locus">MJ1203</name>
</gene>
<accession>P54066</accession>
<evidence type="ECO:0000255" key="1">
    <source>
        <dbReference type="HAMAP-Rule" id="MF_00326"/>
    </source>
</evidence>
<evidence type="ECO:0000305" key="2"/>
<evidence type="ECO:0007829" key="3">
    <source>
        <dbReference type="PDB" id="1XBI"/>
    </source>
</evidence>
<proteinExistence type="evidence at protein level"/>
<protein>
    <recommendedName>
        <fullName evidence="1">Large ribosomal subunit protein eL8</fullName>
    </recommendedName>
    <alternativeName>
        <fullName evidence="2">50S ribosomal protein L7Ae</fullName>
    </alternativeName>
    <alternativeName>
        <fullName evidence="1">Ribosomal protein L8e</fullName>
    </alternativeName>
</protein>
<sequence length="117" mass="12686">MAVYVKFKVPEEIQKELLDAVAKAQKIKKGANEVTKAVERGIAKLVIIAEDVKPEEVVAHLPYLCEEKGIPYAYVASKQDLGKAAGLEVAASSVAIINEGDAEELKVLIEKVNVLKQ</sequence>
<dbReference type="EMBL" id="L77117">
    <property type="protein sequence ID" value="AAB99207.1"/>
    <property type="molecule type" value="Genomic_DNA"/>
</dbReference>
<dbReference type="RefSeq" id="WP_010870715.1">
    <property type="nucleotide sequence ID" value="NC_000909.1"/>
</dbReference>
<dbReference type="PDB" id="1RA4">
    <property type="method" value="X-ray"/>
    <property type="resolution" value="1.86 A"/>
    <property type="chains" value="A=1-117"/>
</dbReference>
<dbReference type="PDB" id="1SDS">
    <property type="method" value="X-ray"/>
    <property type="resolution" value="1.80 A"/>
    <property type="chains" value="A/B/C=1-117"/>
</dbReference>
<dbReference type="PDB" id="1XBI">
    <property type="method" value="X-ray"/>
    <property type="resolution" value="1.45 A"/>
    <property type="chains" value="A=1-117"/>
</dbReference>
<dbReference type="PDB" id="3PAF">
    <property type="method" value="X-ray"/>
    <property type="resolution" value="1.70 A"/>
    <property type="chains" value="A/B=1-117"/>
</dbReference>
<dbReference type="PDB" id="6K0A">
    <property type="method" value="EM"/>
    <property type="resolution" value="4.60 A"/>
    <property type="chains" value="I/J=1-117"/>
</dbReference>
<dbReference type="PDB" id="6K0B">
    <property type="method" value="EM"/>
    <property type="resolution" value="4.30 A"/>
    <property type="chains" value="I/J=1-117"/>
</dbReference>
<dbReference type="PDBsum" id="1RA4"/>
<dbReference type="PDBsum" id="1SDS"/>
<dbReference type="PDBsum" id="1XBI"/>
<dbReference type="PDBsum" id="3PAF"/>
<dbReference type="PDBsum" id="6K0A"/>
<dbReference type="PDBsum" id="6K0B"/>
<dbReference type="EMDB" id="EMD-9900"/>
<dbReference type="SMR" id="P54066"/>
<dbReference type="FunCoup" id="P54066">
    <property type="interactions" value="163"/>
</dbReference>
<dbReference type="IntAct" id="P54066">
    <property type="interactions" value="2"/>
</dbReference>
<dbReference type="STRING" id="243232.MJ_1203"/>
<dbReference type="MoonProt" id="P54066"/>
<dbReference type="PaxDb" id="243232-MJ_1203"/>
<dbReference type="EnsemblBacteria" id="AAB99207">
    <property type="protein sequence ID" value="AAB99207"/>
    <property type="gene ID" value="MJ_1203"/>
</dbReference>
<dbReference type="GeneID" id="1452098"/>
<dbReference type="KEGG" id="mja:MJ_1203"/>
<dbReference type="eggNOG" id="arCOG01751">
    <property type="taxonomic scope" value="Archaea"/>
</dbReference>
<dbReference type="HOGENOM" id="CLU_084513_4_0_2"/>
<dbReference type="InParanoid" id="P54066"/>
<dbReference type="OrthoDB" id="25810at2157"/>
<dbReference type="PhylomeDB" id="P54066"/>
<dbReference type="EvolutionaryTrace" id="P54066"/>
<dbReference type="Proteomes" id="UP000000805">
    <property type="component" value="Chromosome"/>
</dbReference>
<dbReference type="GO" id="GO:0031428">
    <property type="term" value="C:box C/D methylation guide snoRNP complex"/>
    <property type="evidence" value="ECO:0000315"/>
    <property type="project" value="CAFA"/>
</dbReference>
<dbReference type="GO" id="GO:0005737">
    <property type="term" value="C:cytoplasm"/>
    <property type="evidence" value="ECO:0007669"/>
    <property type="project" value="UniProtKB-SubCell"/>
</dbReference>
<dbReference type="GO" id="GO:0005840">
    <property type="term" value="C:ribosome"/>
    <property type="evidence" value="ECO:0007669"/>
    <property type="project" value="UniProtKB-KW"/>
</dbReference>
<dbReference type="GO" id="GO:0034512">
    <property type="term" value="F:box C/D sno(s)RNA binding"/>
    <property type="evidence" value="ECO:0000315"/>
    <property type="project" value="CAFA"/>
</dbReference>
<dbReference type="GO" id="GO:0004526">
    <property type="term" value="F:ribonuclease P activity"/>
    <property type="evidence" value="ECO:0007669"/>
    <property type="project" value="UniProtKB-UniRule"/>
</dbReference>
<dbReference type="GO" id="GO:0019843">
    <property type="term" value="F:rRNA binding"/>
    <property type="evidence" value="ECO:0007669"/>
    <property type="project" value="UniProtKB-KW"/>
</dbReference>
<dbReference type="GO" id="GO:0003735">
    <property type="term" value="F:structural constituent of ribosome"/>
    <property type="evidence" value="ECO:0007669"/>
    <property type="project" value="InterPro"/>
</dbReference>
<dbReference type="GO" id="GO:0000492">
    <property type="term" value="P:box C/D snoRNP assembly"/>
    <property type="evidence" value="ECO:0000315"/>
    <property type="project" value="CAFA"/>
</dbReference>
<dbReference type="GO" id="GO:0042254">
    <property type="term" value="P:ribosome biogenesis"/>
    <property type="evidence" value="ECO:0007669"/>
    <property type="project" value="InterPro"/>
</dbReference>
<dbReference type="GO" id="GO:0006412">
    <property type="term" value="P:translation"/>
    <property type="evidence" value="ECO:0007669"/>
    <property type="project" value="UniProtKB-UniRule"/>
</dbReference>
<dbReference type="GO" id="GO:0001682">
    <property type="term" value="P:tRNA 5'-leader removal"/>
    <property type="evidence" value="ECO:0007669"/>
    <property type="project" value="UniProtKB-UniRule"/>
</dbReference>
<dbReference type="FunFam" id="3.30.1330.30:FF:000020">
    <property type="entry name" value="50S ribosomal protein L7Ae"/>
    <property type="match status" value="1"/>
</dbReference>
<dbReference type="Gene3D" id="3.30.1330.30">
    <property type="match status" value="1"/>
</dbReference>
<dbReference type="HAMAP" id="MF_00326">
    <property type="entry name" value="Ribosomal_eL8"/>
    <property type="match status" value="1"/>
</dbReference>
<dbReference type="InterPro" id="IPR050257">
    <property type="entry name" value="eL8/uL1-like"/>
</dbReference>
<dbReference type="InterPro" id="IPR029064">
    <property type="entry name" value="Ribosomal_eL30-like_sf"/>
</dbReference>
<dbReference type="InterPro" id="IPR004037">
    <property type="entry name" value="Ribosomal_eL8-like_CS"/>
</dbReference>
<dbReference type="InterPro" id="IPR004038">
    <property type="entry name" value="Ribosomal_eL8/eL30/eS12/Gad45"/>
</dbReference>
<dbReference type="InterPro" id="IPR018492">
    <property type="entry name" value="Ribosomal_eL8/Nhp2"/>
</dbReference>
<dbReference type="InterPro" id="IPR022481">
    <property type="entry name" value="Ribosomal_eL8_arc"/>
</dbReference>
<dbReference type="NCBIfam" id="TIGR03677">
    <property type="entry name" value="eL8_ribo"/>
    <property type="match status" value="1"/>
</dbReference>
<dbReference type="PANTHER" id="PTHR23105">
    <property type="entry name" value="RIBOSOMAL PROTEIN L7AE FAMILY MEMBER"/>
    <property type="match status" value="1"/>
</dbReference>
<dbReference type="Pfam" id="PF01248">
    <property type="entry name" value="Ribosomal_L7Ae"/>
    <property type="match status" value="1"/>
</dbReference>
<dbReference type="PRINTS" id="PR00881">
    <property type="entry name" value="L7ARS6FAMILY"/>
</dbReference>
<dbReference type="PRINTS" id="PR00884">
    <property type="entry name" value="RIBOSOMALHS6"/>
</dbReference>
<dbReference type="SUPFAM" id="SSF55315">
    <property type="entry name" value="L30e-like"/>
    <property type="match status" value="1"/>
</dbReference>
<dbReference type="PROSITE" id="PS01082">
    <property type="entry name" value="RIBOSOMAL_L7AE"/>
    <property type="match status" value="1"/>
</dbReference>